<comment type="function">
    <text evidence="1">Has a low ribonuclease activity.</text>
</comment>
<comment type="subcellular location">
    <subcellularLocation>
        <location evidence="3">Secreted</location>
    </subcellularLocation>
</comment>
<comment type="similarity">
    <text evidence="3">Belongs to the pancreatic ribonuclease family.</text>
</comment>
<dbReference type="EC" id="3.1.27.-"/>
<dbReference type="EMBL" id="AF473855">
    <property type="protein sequence ID" value="AAL89645.1"/>
    <property type="molecule type" value="Genomic_DNA"/>
</dbReference>
<dbReference type="RefSeq" id="NP_001009156.1">
    <property type="nucleotide sequence ID" value="NM_001009156.1"/>
</dbReference>
<dbReference type="SMR" id="Q8SPZ8"/>
<dbReference type="FunCoup" id="Q8SPZ8">
    <property type="interactions" value="154"/>
</dbReference>
<dbReference type="STRING" id="9598.ENSPTRP00000052805"/>
<dbReference type="PaxDb" id="9598-ENSPTRP00000052805"/>
<dbReference type="GeneID" id="493984"/>
<dbReference type="KEGG" id="ptr:493984"/>
<dbReference type="CTD" id="122665"/>
<dbReference type="eggNOG" id="ENOG502TDZ3">
    <property type="taxonomic scope" value="Eukaryota"/>
</dbReference>
<dbReference type="InParanoid" id="Q8SPZ8"/>
<dbReference type="Proteomes" id="UP000002277">
    <property type="component" value="Unplaced"/>
</dbReference>
<dbReference type="GO" id="GO:0005615">
    <property type="term" value="C:extracellular space"/>
    <property type="evidence" value="ECO:0000318"/>
    <property type="project" value="GO_Central"/>
</dbReference>
<dbReference type="GO" id="GO:0004519">
    <property type="term" value="F:endonuclease activity"/>
    <property type="evidence" value="ECO:0007669"/>
    <property type="project" value="UniProtKB-KW"/>
</dbReference>
<dbReference type="GO" id="GO:0003676">
    <property type="term" value="F:nucleic acid binding"/>
    <property type="evidence" value="ECO:0007669"/>
    <property type="project" value="InterPro"/>
</dbReference>
<dbReference type="GO" id="GO:0004540">
    <property type="term" value="F:RNA nuclease activity"/>
    <property type="evidence" value="ECO:0000318"/>
    <property type="project" value="GO_Central"/>
</dbReference>
<dbReference type="GO" id="GO:0050832">
    <property type="term" value="P:defense response to fungus"/>
    <property type="evidence" value="ECO:0000318"/>
    <property type="project" value="GO_Central"/>
</dbReference>
<dbReference type="GO" id="GO:0050829">
    <property type="term" value="P:defense response to Gram-negative bacterium"/>
    <property type="evidence" value="ECO:0000318"/>
    <property type="project" value="GO_Central"/>
</dbReference>
<dbReference type="GO" id="GO:0050830">
    <property type="term" value="P:defense response to Gram-positive bacterium"/>
    <property type="evidence" value="ECO:0000318"/>
    <property type="project" value="GO_Central"/>
</dbReference>
<dbReference type="GO" id="GO:0045087">
    <property type="term" value="P:innate immune response"/>
    <property type="evidence" value="ECO:0000318"/>
    <property type="project" value="GO_Central"/>
</dbReference>
<dbReference type="CDD" id="cd06265">
    <property type="entry name" value="RNase_A_canonical"/>
    <property type="match status" value="1"/>
</dbReference>
<dbReference type="FunFam" id="3.10.130.10:FF:000001">
    <property type="entry name" value="Ribonuclease pancreatic"/>
    <property type="match status" value="1"/>
</dbReference>
<dbReference type="Gene3D" id="3.10.130.10">
    <property type="entry name" value="Ribonuclease A-like domain"/>
    <property type="match status" value="1"/>
</dbReference>
<dbReference type="InterPro" id="IPR001427">
    <property type="entry name" value="RNaseA"/>
</dbReference>
<dbReference type="InterPro" id="IPR036816">
    <property type="entry name" value="RNaseA-like_dom_sf"/>
</dbReference>
<dbReference type="InterPro" id="IPR023411">
    <property type="entry name" value="RNaseA_AS"/>
</dbReference>
<dbReference type="InterPro" id="IPR023412">
    <property type="entry name" value="RNaseA_domain"/>
</dbReference>
<dbReference type="PANTHER" id="PTHR11437">
    <property type="entry name" value="RIBONUCLEASE"/>
    <property type="match status" value="1"/>
</dbReference>
<dbReference type="PANTHER" id="PTHR11437:SF25">
    <property type="entry name" value="RIBONUCLEASE 8"/>
    <property type="match status" value="1"/>
</dbReference>
<dbReference type="Pfam" id="PF00074">
    <property type="entry name" value="RnaseA"/>
    <property type="match status" value="1"/>
</dbReference>
<dbReference type="PRINTS" id="PR00794">
    <property type="entry name" value="RIBONUCLEASE"/>
</dbReference>
<dbReference type="SMART" id="SM00092">
    <property type="entry name" value="RNAse_Pc"/>
    <property type="match status" value="1"/>
</dbReference>
<dbReference type="SUPFAM" id="SSF54076">
    <property type="entry name" value="RNase A-like"/>
    <property type="match status" value="1"/>
</dbReference>
<dbReference type="PROSITE" id="PS00127">
    <property type="entry name" value="RNASE_PANCREATIC"/>
    <property type="match status" value="1"/>
</dbReference>
<gene>
    <name type="primary">RNASE8</name>
</gene>
<feature type="signal peptide" evidence="2">
    <location>
        <begin position="1"/>
        <end position="30"/>
    </location>
</feature>
<feature type="chain" id="PRO_0000030906" description="Ribonuclease 8">
    <location>
        <begin position="31"/>
        <end position="157"/>
    </location>
</feature>
<feature type="active site" description="Proton acceptor" evidence="1">
    <location>
        <position position="45"/>
    </location>
</feature>
<feature type="active site" description="Proton donor" evidence="1">
    <location>
        <position position="152"/>
    </location>
</feature>
<feature type="binding site" evidence="1">
    <location>
        <begin position="68"/>
        <end position="72"/>
    </location>
    <ligand>
        <name>substrate</name>
    </ligand>
</feature>
<feature type="binding site" evidence="1">
    <location>
        <position position="93"/>
    </location>
    <ligand>
        <name>substrate</name>
    </ligand>
</feature>
<feature type="disulfide bond" evidence="2">
    <location>
        <begin position="53"/>
        <end position="96"/>
    </location>
</feature>
<feature type="disulfide bond" evidence="1">
    <location>
        <begin position="67"/>
        <end position="121"/>
    </location>
</feature>
<feature type="disulfide bond" evidence="1">
    <location>
        <begin position="85"/>
        <end position="136"/>
    </location>
</feature>
<feature type="disulfide bond" evidence="1">
    <location>
        <begin position="92"/>
        <end position="99"/>
    </location>
</feature>
<keyword id="KW-1015">Disulfide bond</keyword>
<keyword id="KW-0255">Endonuclease</keyword>
<keyword id="KW-0378">Hydrolase</keyword>
<keyword id="KW-0540">Nuclease</keyword>
<keyword id="KW-1185">Reference proteome</keyword>
<keyword id="KW-0964">Secreted</keyword>
<keyword id="KW-0732">Signal</keyword>
<reference key="1">
    <citation type="journal article" date="2002" name="Nucleic Acids Res.">
        <title>RNase 8, a novel RNase A superfamily ribonuclease expressed uniquely in placenta.</title>
        <authorList>
            <person name="Zhang J."/>
            <person name="Dyer K.D."/>
            <person name="Rosenberg H.F."/>
        </authorList>
    </citation>
    <scope>NUCLEOTIDE SEQUENCE [GENOMIC DNA]</scope>
</reference>
<name>RNAS8_PANTR</name>
<protein>
    <recommendedName>
        <fullName>Ribonuclease 8</fullName>
        <shortName>RNase 8</shortName>
        <ecNumber>3.1.27.-</ecNumber>
    </recommendedName>
</protein>
<accession>Q8SPZ8</accession>
<sequence>MAPARAGCCPLLLLLLLLLGLWVAEVLVSAKPKDMTSSQWFKTQHVQPGPQACNSAISNINKYTERCKDLNTFLHEPFSSVAITCQTPNIACKNSCKNCHQSHGPMSLTMGELTSGKYPNCRYKEKHLNTPYMVACDPPQQGDPGYPLVPVHLDKVV</sequence>
<evidence type="ECO:0000250" key="1"/>
<evidence type="ECO:0000255" key="2"/>
<evidence type="ECO:0000305" key="3"/>
<proteinExistence type="inferred from homology"/>
<organism>
    <name type="scientific">Pan troglodytes</name>
    <name type="common">Chimpanzee</name>
    <dbReference type="NCBI Taxonomy" id="9598"/>
    <lineage>
        <taxon>Eukaryota</taxon>
        <taxon>Metazoa</taxon>
        <taxon>Chordata</taxon>
        <taxon>Craniata</taxon>
        <taxon>Vertebrata</taxon>
        <taxon>Euteleostomi</taxon>
        <taxon>Mammalia</taxon>
        <taxon>Eutheria</taxon>
        <taxon>Euarchontoglires</taxon>
        <taxon>Primates</taxon>
        <taxon>Haplorrhini</taxon>
        <taxon>Catarrhini</taxon>
        <taxon>Hominidae</taxon>
        <taxon>Pan</taxon>
    </lineage>
</organism>